<accession>Q9JXK7</accession>
<feature type="signal peptide" evidence="4">
    <location>
        <begin position="1"/>
        <end position="23"/>
    </location>
</feature>
<feature type="chain" id="PRO_5004329313" description="Neisseria adhesin A" evidence="4">
    <location>
        <begin position="24"/>
        <end position="362"/>
    </location>
</feature>
<feature type="transmembrane region" description="Beta stranded" evidence="2">
    <location>
        <begin position="307"/>
        <end position="317"/>
    </location>
</feature>
<feature type="transmembrane region" description="Beta stranded" evidence="2">
    <location>
        <begin position="321"/>
        <end position="332"/>
    </location>
</feature>
<feature type="transmembrane region" description="Beta stranded" evidence="2">
    <location>
        <begin position="339"/>
        <end position="345"/>
    </location>
</feature>
<feature type="transmembrane region" description="Beta stranded" evidence="2">
    <location>
        <begin position="351"/>
        <end position="362"/>
    </location>
</feature>
<feature type="region of interest" description="Head domain" evidence="1">
    <location>
        <begin position="24"/>
        <end position="169"/>
    </location>
</feature>
<feature type="region of interest" description="Coiled stalk domain" evidence="1 14">
    <location>
        <begin position="170"/>
        <end position="307"/>
    </location>
</feature>
<feature type="region of interest" description="Translocator domain" evidence="3">
    <location>
        <begin position="308"/>
        <end position="362"/>
    </location>
</feature>
<feature type="coiled-coil region" evidence="13">
    <location>
        <begin position="90"/>
        <end position="146"/>
    </location>
</feature>
<feature type="coiled-coil region" evidence="13">
    <location>
        <begin position="183"/>
        <end position="288"/>
    </location>
</feature>
<name>NADA1_NEIMB</name>
<proteinExistence type="evidence at protein level"/>
<keyword id="KW-0130">Cell adhesion</keyword>
<keyword id="KW-0998">Cell outer membrane</keyword>
<keyword id="KW-0175">Coiled coil</keyword>
<keyword id="KW-0472">Membrane</keyword>
<keyword id="KW-1185">Reference proteome</keyword>
<keyword id="KW-0732">Signal</keyword>
<keyword id="KW-0812">Transmembrane</keyword>
<keyword id="KW-1134">Transmembrane beta strand</keyword>
<keyword id="KW-0813">Transport</keyword>
<keyword id="KW-0843">Virulence</keyword>
<evidence type="ECO:0000250" key="1">
    <source>
        <dbReference type="UniProtKB" id="A0ELI2"/>
    </source>
</evidence>
<evidence type="ECO:0000250" key="2">
    <source>
        <dbReference type="UniProtKB" id="A1JUB7"/>
    </source>
</evidence>
<evidence type="ECO:0000250" key="3">
    <source>
        <dbReference type="UniProtKB" id="P0C2W0"/>
    </source>
</evidence>
<evidence type="ECO:0000255" key="4"/>
<evidence type="ECO:0000269" key="5">
    <source>
    </source>
</evidence>
<evidence type="ECO:0000269" key="6">
    <source>
    </source>
</evidence>
<evidence type="ECO:0000269" key="7">
    <source>
    </source>
</evidence>
<evidence type="ECO:0000269" key="8">
    <source>
    </source>
</evidence>
<evidence type="ECO:0000269" key="9">
    <source>
    </source>
</evidence>
<evidence type="ECO:0000303" key="10">
    <source>
    </source>
</evidence>
<evidence type="ECO:0000303" key="11">
    <source>
    </source>
</evidence>
<evidence type="ECO:0000305" key="12"/>
<evidence type="ECO:0000305" key="13">
    <source>
    </source>
</evidence>
<evidence type="ECO:0000305" key="14">
    <source>
    </source>
</evidence>
<evidence type="ECO:0000305" key="15">
    <source>
    </source>
</evidence>
<reference key="1">
    <citation type="journal article" date="2000" name="Science">
        <title>Complete genome sequence of Neisseria meningitidis serogroup B strain MC58.</title>
        <authorList>
            <person name="Tettelin H."/>
            <person name="Saunders N.J."/>
            <person name="Heidelberg J.F."/>
            <person name="Jeffries A.C."/>
            <person name="Nelson K.E."/>
            <person name="Eisen J.A."/>
            <person name="Ketchum K.A."/>
            <person name="Hood D.W."/>
            <person name="Peden J.F."/>
            <person name="Dodson R.J."/>
            <person name="Nelson W.C."/>
            <person name="Gwinn M.L."/>
            <person name="DeBoy R.T."/>
            <person name="Peterson J.D."/>
            <person name="Hickey E.K."/>
            <person name="Haft D.H."/>
            <person name="Salzberg S.L."/>
            <person name="White O."/>
            <person name="Fleischmann R.D."/>
            <person name="Dougherty B.A."/>
            <person name="Mason T.M."/>
            <person name="Ciecko A."/>
            <person name="Parksey D.S."/>
            <person name="Blair E."/>
            <person name="Cittone H."/>
            <person name="Clark E.B."/>
            <person name="Cotton M.D."/>
            <person name="Utterback T.R."/>
            <person name="Khouri H.M."/>
            <person name="Qin H."/>
            <person name="Vamathevan J.J."/>
            <person name="Gill J."/>
            <person name="Scarlato V."/>
            <person name="Masignani V."/>
            <person name="Pizza M."/>
            <person name="Grandi G."/>
            <person name="Sun L."/>
            <person name="Smith H.O."/>
            <person name="Fraser C.M."/>
            <person name="Moxon E.R."/>
            <person name="Rappuoli R."/>
            <person name="Venter J.C."/>
        </authorList>
    </citation>
    <scope>NUCLEOTIDE SEQUENCE [LARGE SCALE GENOMIC DNA]</scope>
    <source>
        <strain>ATCC BAA-335 / MC58</strain>
    </source>
</reference>
<reference key="2">
    <citation type="journal article" date="2002" name="J. Exp. Med.">
        <title>NadA, a novel vaccine candidate of Neisseria meningitidis.</title>
        <authorList>
            <person name="Comanducci M."/>
            <person name="Bambini S."/>
            <person name="Brunelli B."/>
            <person name="Adu-Bobie J."/>
            <person name="Arico B."/>
            <person name="Capecchi B."/>
            <person name="Giuliani M.M."/>
            <person name="Masignani V."/>
            <person name="Santini L."/>
            <person name="Savino S."/>
            <person name="Granoff D.M."/>
            <person name="Caugant D.A."/>
            <person name="Pizza M."/>
            <person name="Rappuoli R."/>
            <person name="Mora M."/>
        </authorList>
    </citation>
    <scope>FUNCTION</scope>
    <scope>SUBUNIT</scope>
    <scope>INDUCTION</scope>
    <scope>BIOTECHNOLOGY</scope>
    <source>
        <strain>ATCC BAA-335 / MC58</strain>
    </source>
</reference>
<reference key="3">
    <citation type="journal article" date="2005" name="Mol. Microbiol.">
        <title>Neisseria meningitidis NadA is a new invasin which promotes bacterial adhesion to and penetration into human epithelial cells.</title>
        <authorList>
            <person name="Capecchi B."/>
            <person name="Adu-Bobie J."/>
            <person name="Di Marcello F."/>
            <person name="Ciucchi L."/>
            <person name="Masignani V."/>
            <person name="Taddei A."/>
            <person name="Rappuoli R."/>
            <person name="Pizza M."/>
            <person name="Arico B."/>
        </authorList>
    </citation>
    <scope>FUNCTION</scope>
    <scope>DISRUPTION PHENOTYPE</scope>
    <source>
        <strain>ATCC BAA-335 / MC58</strain>
    </source>
</reference>
<reference key="4">
    <citation type="journal article" date="2009" name="Mol. Microbiol.">
        <title>Expression of the meningococcal adhesin NadA is controlled by a transcriptional regulator of the MarR family.</title>
        <authorList>
            <person name="Schielke S."/>
            <person name="Huebner C."/>
            <person name="Spatz C."/>
            <person name="Naegele V."/>
            <person name="Ackermann N."/>
            <person name="Frosch M."/>
            <person name="Kurzai O."/>
            <person name="Schubert-Unkmeir A."/>
        </authorList>
    </citation>
    <scope>SUBCELLULAR LOCATION</scope>
    <scope>INDUCTION</scope>
    <source>
        <strain>ATCC BAA-335 / MC58</strain>
    </source>
</reference>
<reference key="5">
    <citation type="journal article" date="2011" name="J. Biol. Chem.">
        <title>Neisseria meningitidis adhesin NadA targets beta1 integrins: functional similarity to Yersinia invasin.</title>
        <authorList>
            <person name="Naegele V."/>
            <person name="Heesemann J."/>
            <person name="Schielke S."/>
            <person name="Jimenez-Soto L.F."/>
            <person name="Kurzai O."/>
            <person name="Ackermann N."/>
        </authorList>
    </citation>
    <scope>EXPRESSION IN Y.ENTEROCOLITICA</scope>
    <scope>INTERACTION WITH HUMAN INTEGRIN BETA-1</scope>
    <scope>PROBABLE SUBUNIT</scope>
    <scope>SUBCELLULAR LOCATION</scope>
    <scope>DISRUPTION PHENOTYPE</scope>
    <source>
        <strain>ATCC BAA-335 / MC58</strain>
    </source>
</reference>
<reference key="6">
    <citation type="journal article" date="2012" name="Cell. Microbiol.">
        <title>Human heat shock protein (Hsp) 90 interferes with Neisseria meningitidis adhesin A (NadA)-mediated adhesion and invasion.</title>
        <authorList>
            <person name="Montanari P."/>
            <person name="Bozza G."/>
            <person name="Capecchi B."/>
            <person name="Caproni E."/>
            <person name="Barrile R."/>
            <person name="Norais N."/>
            <person name="Capitani M."/>
            <person name="Sallese M."/>
            <person name="Cecchini P."/>
            <person name="Ciucchi L."/>
            <person name="Gao Z."/>
            <person name="Rappuoli R."/>
            <person name="Pizza M."/>
            <person name="Arico B."/>
            <person name="Merola M."/>
        </authorList>
    </citation>
    <scope>DISRUPTION PHENOTYPE</scope>
    <source>
        <strain>ATCC BAA-335 / MC58</strain>
    </source>
</reference>
<organism>
    <name type="scientific">Neisseria meningitidis serogroup B (strain ATCC BAA-335 / MC58)</name>
    <dbReference type="NCBI Taxonomy" id="122586"/>
    <lineage>
        <taxon>Bacteria</taxon>
        <taxon>Pseudomonadati</taxon>
        <taxon>Pseudomonadota</taxon>
        <taxon>Betaproteobacteria</taxon>
        <taxon>Neisseriales</taxon>
        <taxon>Neisseriaceae</taxon>
        <taxon>Neisseria</taxon>
    </lineage>
</organism>
<sequence>MKHFPSKVLTTAILATFCSGALAATSDDDVKKAATVAIVAAYNNGQEINGFKAGETIYDIGEDGTITQKDATAADVEADDFKGLGLKKVVTNLTKTVNENKQNVDAKVKAAESEIEKLTTKLADTDAALADTDAALDETTNALNKLGENITTFAEETKTNIVKIDEKLEAVADTVDKHAEAFNDIADSLDETNTKADEAVKTANEAKQTAEETKQNVDAKVKAAETAAGKAEAAAGTANTAADKAEAVAAKVTDIKADIATNKADIAKNSARIDSLDKNVANLRKETRQGLAEQAALSGLFQPYNVGRFNVTAAVGGYKSESAVAIGTGFRFTENFAAKAGVAVGTSSGSSAAYHVGVNYEW</sequence>
<protein>
    <recommendedName>
        <fullName evidence="11">Neisseria adhesin A</fullName>
        <shortName evidence="11">NadA variant 1</shortName>
    </recommendedName>
</protein>
<dbReference type="EMBL" id="AE002098">
    <property type="protein sequence ID" value="AAF42321.1"/>
    <property type="status" value="ALT_INIT"/>
    <property type="molecule type" value="Genomic_DNA"/>
</dbReference>
<dbReference type="PIR" id="A81019">
    <property type="entry name" value="A81019"/>
</dbReference>
<dbReference type="RefSeq" id="NP_274986.1">
    <property type="nucleotide sequence ID" value="NC_003112.2"/>
</dbReference>
<dbReference type="RefSeq" id="WP_002225868.1">
    <property type="nucleotide sequence ID" value="NC_003112.2"/>
</dbReference>
<dbReference type="SMR" id="Q9JXK7"/>
<dbReference type="STRING" id="122586.NMB1994"/>
<dbReference type="PaxDb" id="122586-NMB1994"/>
<dbReference type="ABCD" id="Q9JXK7">
    <property type="antibodies" value="7 sequenced antibodies"/>
</dbReference>
<dbReference type="KEGG" id="nme:NMB1994"/>
<dbReference type="PATRIC" id="fig|122586.8.peg.2547"/>
<dbReference type="HOGENOM" id="CLU_638628_0_0_4"/>
<dbReference type="InParanoid" id="Q9JXK7"/>
<dbReference type="OrthoDB" id="8607186at2"/>
<dbReference type="Proteomes" id="UP000000425">
    <property type="component" value="Chromosome"/>
</dbReference>
<dbReference type="GO" id="GO:0009279">
    <property type="term" value="C:cell outer membrane"/>
    <property type="evidence" value="ECO:0007669"/>
    <property type="project" value="UniProtKB-SubCell"/>
</dbReference>
<dbReference type="GO" id="GO:0009986">
    <property type="term" value="C:cell surface"/>
    <property type="evidence" value="ECO:0007669"/>
    <property type="project" value="UniProtKB-SubCell"/>
</dbReference>
<dbReference type="GO" id="GO:0007155">
    <property type="term" value="P:cell adhesion"/>
    <property type="evidence" value="ECO:0007669"/>
    <property type="project" value="UniProtKB-KW"/>
</dbReference>
<dbReference type="Gene3D" id="3.30.1300.30">
    <property type="entry name" value="GSPII I/J protein-like"/>
    <property type="match status" value="1"/>
</dbReference>
<dbReference type="Gene3D" id="1.10.287.950">
    <property type="entry name" value="Methyl-accepting chemotaxis protein"/>
    <property type="match status" value="1"/>
</dbReference>
<dbReference type="InterPro" id="IPR045584">
    <property type="entry name" value="Pilin-like"/>
</dbReference>
<dbReference type="InterPro" id="IPR005594">
    <property type="entry name" value="YadA_C"/>
</dbReference>
<dbReference type="Pfam" id="PF03895">
    <property type="entry name" value="YadA_anchor"/>
    <property type="match status" value="1"/>
</dbReference>
<dbReference type="SUPFAM" id="SSF54523">
    <property type="entry name" value="Pili subunits"/>
    <property type="match status" value="1"/>
</dbReference>
<dbReference type="SUPFAM" id="SSF57997">
    <property type="entry name" value="Tropomyosin"/>
    <property type="match status" value="1"/>
</dbReference>
<gene>
    <name evidence="11" type="primary">nadA</name>
    <name evidence="12" type="synonym">nadA1</name>
    <name evidence="10" type="ordered locus">NMB1994</name>
</gene>
<comment type="function">
    <text evidence="5 8 14">Adheres to and induces bacterial uptake by human epithelial cells (Probable). Upon expression in engineered Y.enterocolitica confers an 11- to 15-fold increase in bacterial adherence and uptake by human epithelial cell lines; part of the uptake is mediated by integrin beta-1 (ITGB1) suggesting it may be a human receptor for NadA (PubMed:21471204). A bacterial cell surface protein; antisera against this protein induce complement-mediated killing of this and other strains (PubMed:12045242).</text>
</comment>
<comment type="subunit">
    <text evidence="5 8 15">Forms high molecular weight oligomers in whole cell extracts that are not disrupted by boiling in SDS buffer (PubMed:12045242). Homotrimer (Probable). A fragment containing the N-terminal half of the mature protein (residues 24-210, head domain plus part of the stalk) binds human integrin beta-1 (ITGB1). It was not seen to bind immobilized purified CEACAMs 1, 3, 5, 6 or 8 nor commercially prepared type I collagen, fibronectin or matrigel (PubMed:21471204).</text>
</comment>
<comment type="subcellular location">
    <subcellularLocation>
        <location evidence="7 15">Cell surface</location>
    </subcellularLocation>
    <subcellularLocation>
        <location evidence="15">Cell outer membrane</location>
    </subcellularLocation>
    <text evidence="8">Cell outer membrane localization shown in Y.enterocolitica.</text>
</comment>
<comment type="induction">
    <text evidence="5 7">Barely visible in early log phase, levels increase to a maximum in stationary phase cells (at protein level) (PubMed:12045242). Transcription is repressed by NadR (FarR) (PubMed:19400792).</text>
</comment>
<comment type="domain">
    <text evidence="1 3">The signal peptide, cleaved at the inner membrane, guides the autotransporter protein to the periplasmic space. Insertion of the C-terminal translocator domain in the outer membrane forms a hydrophilic pore for the translocation of the passenger domain to the bacterial cell surface (By similarity). The trimeric head domain (about residues 24-169) is highly antigenic, it sits at the end of a coiled-coil stalk (about residues 170-307) (By similarity).</text>
</comment>
<comment type="disruption phenotype">
    <text evidence="6 8 9">Bacteria adhere 3-fold less well to human cells, a double unencapsulated nadA-saiD deletion is 3-fold less invasive, a triple nadA-opc-siaD deletion is about 10-fold less invasive (PubMed:15660996). No change in invasion of human epithelial cell lines that express or not integrin beta-1 (PubMed:21471204). Bacteria clump more in the presence of human Chang cells, few clumps are associated with human HSP90 (PubMed:22066472).</text>
</comment>
<comment type="biotechnology">
    <text evidence="13">Several alleles exist that vary in length, this is variant 1; alleles 1, 2 and 3 generate cross-bactericidal antibodies, making this protein a good candidate for a serogroup B vaccine molecule. About 50% of hypervirulent serogroup B N.meningitidis encode this protein.</text>
</comment>
<comment type="similarity">
    <text evidence="12">Belongs to the autotransporter-2 (AT-2) (TC 1.B.40) family.</text>
</comment>
<comment type="caution">
    <text>The gene name nadA has also been given to quinolinate synthase.</text>
</comment>
<comment type="sequence caution" evidence="13">
    <conflict type="erroneous initiation">
        <sequence resource="EMBL-CDS" id="AAF42321"/>
    </conflict>
    <text>Extended N-terminus.</text>
</comment>
<comment type="online information" name="Bexsero meningococcal group B Vaccine (4CMenB)">
    <link uri="https://www.ema.europa.eu/en/medicines/human/EPAR/bexsero"/>
</comment>